<keyword id="KW-0025">Alternative splicing</keyword>
<keyword id="KW-0472">Membrane</keyword>
<keyword id="KW-1185">Reference proteome</keyword>
<keyword id="KW-0732">Signal</keyword>
<keyword id="KW-0812">Transmembrane</keyword>
<keyword id="KW-1133">Transmembrane helix</keyword>
<protein>
    <recommendedName>
        <fullName>Formin-like protein 3</fullName>
        <shortName>AtFH3</shortName>
        <shortName>AtFORMIN-3</shortName>
    </recommendedName>
</protein>
<name>FH3_ARATH</name>
<gene>
    <name type="primary">FH3</name>
    <name type="ordered locus">At4g15200/At4g15190</name>
    <name type="ORF">Dl3645c/Dl3640c</name>
    <name type="ORF">FCAALL.218</name>
</gene>
<evidence type="ECO:0000255" key="1"/>
<evidence type="ECO:0000255" key="2">
    <source>
        <dbReference type="PROSITE-ProRule" id="PRU00774"/>
    </source>
</evidence>
<evidence type="ECO:0000256" key="3">
    <source>
        <dbReference type="SAM" id="MobiDB-lite"/>
    </source>
</evidence>
<evidence type="ECO:0000269" key="4">
    <source>
    </source>
</evidence>
<evidence type="ECO:0000305" key="5"/>
<dbReference type="EMBL" id="FJ415316">
    <property type="protein sequence ID" value="ACQ91096.1"/>
    <property type="molecule type" value="mRNA"/>
</dbReference>
<dbReference type="EMBL" id="Z97338">
    <property type="protein sequence ID" value="CAB10298.1"/>
    <property type="status" value="ALT_SEQ"/>
    <property type="molecule type" value="Genomic_DNA"/>
</dbReference>
<dbReference type="EMBL" id="Z97338">
    <property type="protein sequence ID" value="CAB10299.1"/>
    <property type="status" value="ALT_SEQ"/>
    <property type="molecule type" value="Genomic_DNA"/>
</dbReference>
<dbReference type="EMBL" id="AL161540">
    <property type="protein sequence ID" value="CAB78561.1"/>
    <property type="status" value="ALT_SEQ"/>
    <property type="molecule type" value="Genomic_DNA"/>
</dbReference>
<dbReference type="EMBL" id="AL161540">
    <property type="protein sequence ID" value="CAB78562.1"/>
    <property type="status" value="ALT_SEQ"/>
    <property type="molecule type" value="Genomic_DNA"/>
</dbReference>
<dbReference type="EMBL" id="CP002687">
    <property type="status" value="NOT_ANNOTATED_CDS"/>
    <property type="molecule type" value="Genomic_DNA"/>
</dbReference>
<dbReference type="PIR" id="A71416">
    <property type="entry name" value="A71416"/>
</dbReference>
<dbReference type="PIR" id="H71415">
    <property type="entry name" value="H71415"/>
</dbReference>
<dbReference type="SMR" id="O23373"/>
<dbReference type="STRING" id="3702.O23373"/>
<dbReference type="PaxDb" id="3702-AT4G15200.1"/>
<dbReference type="ProteomicsDB" id="230575">
    <molecule id="O23373-1"/>
</dbReference>
<dbReference type="Araport" id="AT4G15200"/>
<dbReference type="TAIR" id="AT4G15200">
    <property type="gene designation" value="FH3"/>
</dbReference>
<dbReference type="eggNOG" id="KOG1922">
    <property type="taxonomic scope" value="Eukaryota"/>
</dbReference>
<dbReference type="HOGENOM" id="CLU_020967_0_0_1"/>
<dbReference type="InParanoid" id="O23373"/>
<dbReference type="PhylomeDB" id="O23373"/>
<dbReference type="PRO" id="PR:O23373"/>
<dbReference type="Proteomes" id="UP000006548">
    <property type="component" value="Chromosome 4"/>
</dbReference>
<dbReference type="ExpressionAtlas" id="O23373">
    <property type="expression patterns" value="baseline and differential"/>
</dbReference>
<dbReference type="GO" id="GO:0005856">
    <property type="term" value="C:cytoskeleton"/>
    <property type="evidence" value="ECO:0000318"/>
    <property type="project" value="GO_Central"/>
</dbReference>
<dbReference type="GO" id="GO:0016020">
    <property type="term" value="C:membrane"/>
    <property type="evidence" value="ECO:0007669"/>
    <property type="project" value="UniProtKB-SubCell"/>
</dbReference>
<dbReference type="GO" id="GO:0051015">
    <property type="term" value="F:actin filament binding"/>
    <property type="evidence" value="ECO:0000318"/>
    <property type="project" value="GO_Central"/>
</dbReference>
<dbReference type="GO" id="GO:0030036">
    <property type="term" value="P:actin cytoskeleton organization"/>
    <property type="evidence" value="ECO:0000318"/>
    <property type="project" value="GO_Central"/>
</dbReference>
<dbReference type="GO" id="GO:0045010">
    <property type="term" value="P:actin nucleation"/>
    <property type="evidence" value="ECO:0007669"/>
    <property type="project" value="InterPro"/>
</dbReference>
<dbReference type="Gene3D" id="1.20.58.2220">
    <property type="entry name" value="Formin, FH2 domain"/>
    <property type="match status" value="1"/>
</dbReference>
<dbReference type="InterPro" id="IPR015425">
    <property type="entry name" value="FH2_Formin"/>
</dbReference>
<dbReference type="InterPro" id="IPR042201">
    <property type="entry name" value="FH2_Formin_sf"/>
</dbReference>
<dbReference type="InterPro" id="IPR027643">
    <property type="entry name" value="Formin-like_plant"/>
</dbReference>
<dbReference type="PANTHER" id="PTHR23213:SF392">
    <property type="entry name" value="FORMIN-LIKE PROTEIN 3"/>
    <property type="match status" value="1"/>
</dbReference>
<dbReference type="PANTHER" id="PTHR23213">
    <property type="entry name" value="FORMIN-RELATED"/>
    <property type="match status" value="1"/>
</dbReference>
<dbReference type="Pfam" id="PF02181">
    <property type="entry name" value="FH2"/>
    <property type="match status" value="1"/>
</dbReference>
<dbReference type="SMART" id="SM00498">
    <property type="entry name" value="FH2"/>
    <property type="match status" value="1"/>
</dbReference>
<dbReference type="SUPFAM" id="SSF101447">
    <property type="entry name" value="Formin homology 2 domain (FH2 domain)"/>
    <property type="match status" value="1"/>
</dbReference>
<dbReference type="PROSITE" id="PS51444">
    <property type="entry name" value="FH2"/>
    <property type="match status" value="1"/>
</dbReference>
<reference key="1">
    <citation type="journal article" date="2009" name="Plant Cell">
        <title>Arabidopsis formin3 directs the formation of actin cables and polarized growth in pollen tubes.</title>
        <authorList>
            <person name="Ye J."/>
            <person name="Zheng Y."/>
            <person name="Yan A."/>
            <person name="Chen N."/>
            <person name="Wang Z."/>
            <person name="Huang S."/>
            <person name="Yang Z."/>
        </authorList>
    </citation>
    <scope>NUCLEOTIDE SEQUENCE [MRNA]</scope>
    <scope>FUNCTION</scope>
</reference>
<reference key="2">
    <citation type="journal article" date="1998" name="Nature">
        <title>Analysis of 1.9 Mb of contiguous sequence from chromosome 4 of Arabidopsis thaliana.</title>
        <authorList>
            <person name="Bevan M."/>
            <person name="Bancroft I."/>
            <person name="Bent E."/>
            <person name="Love K."/>
            <person name="Goodman H.M."/>
            <person name="Dean C."/>
            <person name="Bergkamp R."/>
            <person name="Dirkse W."/>
            <person name="van Staveren M."/>
            <person name="Stiekema W."/>
            <person name="Drost L."/>
            <person name="Ridley P."/>
            <person name="Hudson S.-A."/>
            <person name="Patel K."/>
            <person name="Murphy G."/>
            <person name="Piffanelli P."/>
            <person name="Wedler H."/>
            <person name="Wedler E."/>
            <person name="Wambutt R."/>
            <person name="Weitzenegger T."/>
            <person name="Pohl T."/>
            <person name="Terryn N."/>
            <person name="Gielen J."/>
            <person name="Villarroel R."/>
            <person name="De Clercq R."/>
            <person name="van Montagu M."/>
            <person name="Lecharny A."/>
            <person name="Aubourg S."/>
            <person name="Gy I."/>
            <person name="Kreis M."/>
            <person name="Lao N."/>
            <person name="Kavanagh T."/>
            <person name="Hempel S."/>
            <person name="Kotter P."/>
            <person name="Entian K.-D."/>
            <person name="Rieger M."/>
            <person name="Schaefer M."/>
            <person name="Funk B."/>
            <person name="Mueller-Auer S."/>
            <person name="Silvey M."/>
            <person name="James R."/>
            <person name="Monfort A."/>
            <person name="Pons A."/>
            <person name="Puigdomenech P."/>
            <person name="Douka A."/>
            <person name="Voukelatou E."/>
            <person name="Milioni D."/>
            <person name="Hatzopoulos P."/>
            <person name="Piravandi E."/>
            <person name="Obermaier B."/>
            <person name="Hilbert H."/>
            <person name="Duesterhoeft A."/>
            <person name="Moores T."/>
            <person name="Jones J.D.G."/>
            <person name="Eneva T."/>
            <person name="Palme K."/>
            <person name="Benes V."/>
            <person name="Rechmann S."/>
            <person name="Ansorge W."/>
            <person name="Cooke R."/>
            <person name="Berger C."/>
            <person name="Delseny M."/>
            <person name="Voet M."/>
            <person name="Volckaert G."/>
            <person name="Mewes H.-W."/>
            <person name="Klosterman S."/>
            <person name="Schueller C."/>
            <person name="Chalwatzis N."/>
        </authorList>
    </citation>
    <scope>NUCLEOTIDE SEQUENCE [LARGE SCALE GENOMIC DNA]</scope>
    <source>
        <strain>cv. Columbia</strain>
    </source>
</reference>
<reference key="3">
    <citation type="journal article" date="1999" name="Nature">
        <title>Sequence and analysis of chromosome 4 of the plant Arabidopsis thaliana.</title>
        <authorList>
            <person name="Mayer K.F.X."/>
            <person name="Schueller C."/>
            <person name="Wambutt R."/>
            <person name="Murphy G."/>
            <person name="Volckaert G."/>
            <person name="Pohl T."/>
            <person name="Duesterhoeft A."/>
            <person name="Stiekema W."/>
            <person name="Entian K.-D."/>
            <person name="Terryn N."/>
            <person name="Harris B."/>
            <person name="Ansorge W."/>
            <person name="Brandt P."/>
            <person name="Grivell L.A."/>
            <person name="Rieger M."/>
            <person name="Weichselgartner M."/>
            <person name="de Simone V."/>
            <person name="Obermaier B."/>
            <person name="Mache R."/>
            <person name="Mueller M."/>
            <person name="Kreis M."/>
            <person name="Delseny M."/>
            <person name="Puigdomenech P."/>
            <person name="Watson M."/>
            <person name="Schmidtheini T."/>
            <person name="Reichert B."/>
            <person name="Portetelle D."/>
            <person name="Perez-Alonso M."/>
            <person name="Boutry M."/>
            <person name="Bancroft I."/>
            <person name="Vos P."/>
            <person name="Hoheisel J."/>
            <person name="Zimmermann W."/>
            <person name="Wedler H."/>
            <person name="Ridley P."/>
            <person name="Langham S.-A."/>
            <person name="McCullagh B."/>
            <person name="Bilham L."/>
            <person name="Robben J."/>
            <person name="van der Schueren J."/>
            <person name="Grymonprez B."/>
            <person name="Chuang Y.-J."/>
            <person name="Vandenbussche F."/>
            <person name="Braeken M."/>
            <person name="Weltjens I."/>
            <person name="Voet M."/>
            <person name="Bastiaens I."/>
            <person name="Aert R."/>
            <person name="Defoor E."/>
            <person name="Weitzenegger T."/>
            <person name="Bothe G."/>
            <person name="Ramsperger U."/>
            <person name="Hilbert H."/>
            <person name="Braun M."/>
            <person name="Holzer E."/>
            <person name="Brandt A."/>
            <person name="Peters S."/>
            <person name="van Staveren M."/>
            <person name="Dirkse W."/>
            <person name="Mooijman P."/>
            <person name="Klein Lankhorst R."/>
            <person name="Rose M."/>
            <person name="Hauf J."/>
            <person name="Koetter P."/>
            <person name="Berneiser S."/>
            <person name="Hempel S."/>
            <person name="Feldpausch M."/>
            <person name="Lamberth S."/>
            <person name="Van den Daele H."/>
            <person name="De Keyser A."/>
            <person name="Buysshaert C."/>
            <person name="Gielen J."/>
            <person name="Villarroel R."/>
            <person name="De Clercq R."/>
            <person name="van Montagu M."/>
            <person name="Rogers J."/>
            <person name="Cronin A."/>
            <person name="Quail M.A."/>
            <person name="Bray-Allen S."/>
            <person name="Clark L."/>
            <person name="Doggett J."/>
            <person name="Hall S."/>
            <person name="Kay M."/>
            <person name="Lennard N."/>
            <person name="McLay K."/>
            <person name="Mayes R."/>
            <person name="Pettett A."/>
            <person name="Rajandream M.A."/>
            <person name="Lyne M."/>
            <person name="Benes V."/>
            <person name="Rechmann S."/>
            <person name="Borkova D."/>
            <person name="Bloecker H."/>
            <person name="Scharfe M."/>
            <person name="Grimm M."/>
            <person name="Loehnert T.-H."/>
            <person name="Dose S."/>
            <person name="de Haan M."/>
            <person name="Maarse A.C."/>
            <person name="Schaefer M."/>
            <person name="Mueller-Auer S."/>
            <person name="Gabel C."/>
            <person name="Fuchs M."/>
            <person name="Fartmann B."/>
            <person name="Granderath K."/>
            <person name="Dauner D."/>
            <person name="Herzl A."/>
            <person name="Neumann S."/>
            <person name="Argiriou A."/>
            <person name="Vitale D."/>
            <person name="Liguori R."/>
            <person name="Piravandi E."/>
            <person name="Massenet O."/>
            <person name="Quigley F."/>
            <person name="Clabauld G."/>
            <person name="Muendlein A."/>
            <person name="Felber R."/>
            <person name="Schnabl S."/>
            <person name="Hiller R."/>
            <person name="Schmidt W."/>
            <person name="Lecharny A."/>
            <person name="Aubourg S."/>
            <person name="Chefdor F."/>
            <person name="Cooke R."/>
            <person name="Berger C."/>
            <person name="Monfort A."/>
            <person name="Casacuberta E."/>
            <person name="Gibbons T."/>
            <person name="Weber N."/>
            <person name="Vandenbol M."/>
            <person name="Bargues M."/>
            <person name="Terol J."/>
            <person name="Torres A."/>
            <person name="Perez-Perez A."/>
            <person name="Purnelle B."/>
            <person name="Bent E."/>
            <person name="Johnson S."/>
            <person name="Tacon D."/>
            <person name="Jesse T."/>
            <person name="Heijnen L."/>
            <person name="Schwarz S."/>
            <person name="Scholler P."/>
            <person name="Heber S."/>
            <person name="Francs P."/>
            <person name="Bielke C."/>
            <person name="Frishman D."/>
            <person name="Haase D."/>
            <person name="Lemcke K."/>
            <person name="Mewes H.-W."/>
            <person name="Stocker S."/>
            <person name="Zaccaria P."/>
            <person name="Bevan M."/>
            <person name="Wilson R.K."/>
            <person name="de la Bastide M."/>
            <person name="Habermann K."/>
            <person name="Parnell L."/>
            <person name="Dedhia N."/>
            <person name="Gnoj L."/>
            <person name="Schutz K."/>
            <person name="Huang E."/>
            <person name="Spiegel L."/>
            <person name="Sekhon M."/>
            <person name="Murray J."/>
            <person name="Sheet P."/>
            <person name="Cordes M."/>
            <person name="Abu-Threideh J."/>
            <person name="Stoneking T."/>
            <person name="Kalicki J."/>
            <person name="Graves T."/>
            <person name="Harmon G."/>
            <person name="Edwards J."/>
            <person name="Latreille P."/>
            <person name="Courtney L."/>
            <person name="Cloud J."/>
            <person name="Abbott A."/>
            <person name="Scott K."/>
            <person name="Johnson D."/>
            <person name="Minx P."/>
            <person name="Bentley D."/>
            <person name="Fulton B."/>
            <person name="Miller N."/>
            <person name="Greco T."/>
            <person name="Kemp K."/>
            <person name="Kramer J."/>
            <person name="Fulton L."/>
            <person name="Mardis E."/>
            <person name="Dante M."/>
            <person name="Pepin K."/>
            <person name="Hillier L.W."/>
            <person name="Nelson J."/>
            <person name="Spieth J."/>
            <person name="Ryan E."/>
            <person name="Andrews S."/>
            <person name="Geisel C."/>
            <person name="Layman D."/>
            <person name="Du H."/>
            <person name="Ali J."/>
            <person name="Berghoff A."/>
            <person name="Jones K."/>
            <person name="Drone K."/>
            <person name="Cotton M."/>
            <person name="Joshu C."/>
            <person name="Antonoiu B."/>
            <person name="Zidanic M."/>
            <person name="Strong C."/>
            <person name="Sun H."/>
            <person name="Lamar B."/>
            <person name="Yordan C."/>
            <person name="Ma P."/>
            <person name="Zhong J."/>
            <person name="Preston R."/>
            <person name="Vil D."/>
            <person name="Shekher M."/>
            <person name="Matero A."/>
            <person name="Shah R."/>
            <person name="Swaby I.K."/>
            <person name="O'Shaughnessy A."/>
            <person name="Rodriguez M."/>
            <person name="Hoffman J."/>
            <person name="Till S."/>
            <person name="Granat S."/>
            <person name="Shohdy N."/>
            <person name="Hasegawa A."/>
            <person name="Hameed A."/>
            <person name="Lodhi M."/>
            <person name="Johnson A."/>
            <person name="Chen E."/>
            <person name="Marra M.A."/>
            <person name="Martienssen R."/>
            <person name="McCombie W.R."/>
        </authorList>
    </citation>
    <scope>NUCLEOTIDE SEQUENCE [LARGE SCALE GENOMIC DNA]</scope>
    <source>
        <strain>cv. Columbia</strain>
    </source>
</reference>
<reference key="4">
    <citation type="journal article" date="2017" name="Plant J.">
        <title>Araport11: a complete reannotation of the Arabidopsis thaliana reference genome.</title>
        <authorList>
            <person name="Cheng C.Y."/>
            <person name="Krishnakumar V."/>
            <person name="Chan A.P."/>
            <person name="Thibaud-Nissen F."/>
            <person name="Schobel S."/>
            <person name="Town C.D."/>
        </authorList>
    </citation>
    <scope>GENOME REANNOTATION</scope>
    <source>
        <strain>cv. Columbia</strain>
    </source>
</reference>
<reference key="5">
    <citation type="journal article" date="2000" name="Genome Biol.">
        <title>Are plant formins integral membrane proteins?</title>
        <authorList>
            <person name="Cvrckova F."/>
        </authorList>
    </citation>
    <scope>GENE FAMILY ORGANIZATION</scope>
</reference>
<reference key="6">
    <citation type="journal article" date="2002" name="Trends Plant Sci.">
        <title>Formins: intermediates in signal-transduction cascades that affect cytoskeletal reorganization.</title>
        <authorList>
            <person name="Deeks M.J."/>
            <person name="Hussey P.J."/>
            <person name="Davies B."/>
        </authorList>
    </citation>
    <scope>GENE FAMILY ORGANIZATION</scope>
    <scope>NOMENCLATURE</scope>
</reference>
<reference key="7">
    <citation type="journal article" date="2004" name="BMC Genomics">
        <title>Formin homology 2 domains occur in multiple contexts in angiosperms.</title>
        <authorList>
            <person name="Cvrckova F."/>
            <person name="Novotny M."/>
            <person name="Pickova D."/>
            <person name="Zarsky V."/>
        </authorList>
    </citation>
    <scope>GENE FAMILY ORGANIZATION</scope>
    <scope>NOMENCLATURE</scope>
</reference>
<comment type="function">
    <text evidence="4">Acts as actin nucleation factor that directs the formation of actin cables and polarized growth in pollen tubes.</text>
</comment>
<comment type="subcellular location">
    <subcellularLocation>
        <location evidence="5">Membrane</location>
        <topology evidence="5">Single-pass membrane protein</topology>
    </subcellularLocation>
</comment>
<comment type="alternative products">
    <event type="alternative splicing"/>
    <isoform>
        <id>O23373-1</id>
        <name>1</name>
        <sequence type="displayed"/>
    </isoform>
    <text>A number of isoforms are produced. According to EST sequences.</text>
</comment>
<comment type="similarity">
    <text evidence="5">Belongs to the formin-like family. Class-I subfamily.</text>
</comment>
<comment type="sequence caution" evidence="5">
    <conflict type="erroneous gene model prediction">
        <sequence resource="EMBL-CDS" id="CAB10298"/>
    </conflict>
    <text>Was originally thought to correspond to two different genes At4g15190 and At4g15200.</text>
</comment>
<comment type="sequence caution" evidence="5">
    <conflict type="erroneous gene model prediction">
        <sequence resource="EMBL-CDS" id="CAB10299"/>
    </conflict>
    <text>Was originally thought to correspond to two different genes At4g15190 and At4g15200.</text>
</comment>
<comment type="sequence caution" evidence="5">
    <conflict type="frameshift">
        <sequence resource="EMBL-CDS" id="CAB10299"/>
    </conflict>
</comment>
<comment type="sequence caution" evidence="5">
    <conflict type="erroneous gene model prediction">
        <sequence resource="EMBL-CDS" id="CAB78561"/>
    </conflict>
    <text>Was originally thought to correspond to two different genes At4g15190 and At4g15200.</text>
</comment>
<comment type="sequence caution" evidence="5">
    <conflict type="erroneous gene model prediction">
        <sequence resource="EMBL-CDS" id="CAB78562"/>
    </conflict>
    <text>Was originally thought to correspond to two different genes At4g15190 and At4g15200.</text>
</comment>
<comment type="sequence caution" evidence="5">
    <conflict type="frameshift">
        <sequence resource="EMBL-CDS" id="CAB78562"/>
    </conflict>
</comment>
<proteinExistence type="evidence at transcript level"/>
<sequence>MGRLRLAFLAISLVVFVCVSEEIFSRGGLNLLRFSVYGEDVAEQTWIHQNPRRKLISYPKKFSVSAPNLAFGPAPSFAPGPGPSFAPGPAPNPRSYDWLAPASSPNEPPAETPDESSPSPSEETPSVVAPSQSVPGPPRPPPQREKKDDILMKLIIAVASTAVLTFVFVALMFLCCFKRNCNNAVGSRDGPRDEGPLLRLSTGSTENSPTVASTSRKMFSVASSKKRSFLSRVSLKRNGHEFSTAESSSAAGLPPLKLPPGRSAPPPPPAAAPPPQPPPPPPPKPQPPPPPKIARPPPAPPKGAAPKRQGNTSSGDASDVDSETGAPKTKLKPFFWDKMANPDQKMVWHEISAGSFQFNEEAMESLFGYNDGNKNKNGQKSTDSSLRESPLQYIQIIDTRKAQNLSILLRALNVTTEEVVDAIKEGNELPVELLQTLLKMAPTSEEELKLRLYSGDLHLLGPAERFLKILVDIPFAFKRIESLLFMISLQEEVSGLKEALGTLEVACKKLRNSRLFLKLLEAVLKTGNRMNVGTFRGDAQAFKLDTLLKLSDVKGTDGKTTLLHFVVLEIIRSEGVRALRLQSRSFSSVKTDDSNADSSPQSVERYRSTGLQVVTGLTTELEDVKRAAIIDADGLAATLANISGSLTNAREFLKTMDEESDFERALAGFIERADADFKWLKEEEERIMVLVKSSADYFHGKSAKNEGLRLFAIVRDFLIMLEKVCREVKETTKTTNHSGKKESEMTTSDSNQPSPDFRQRLFPAIAERRMDSSDDSDDEEDSSPS</sequence>
<accession>O23373</accession>
<accession>D0QAN4</accession>
<accession>F4JJE7</accession>
<accession>O23374</accession>
<organism>
    <name type="scientific">Arabidopsis thaliana</name>
    <name type="common">Mouse-ear cress</name>
    <dbReference type="NCBI Taxonomy" id="3702"/>
    <lineage>
        <taxon>Eukaryota</taxon>
        <taxon>Viridiplantae</taxon>
        <taxon>Streptophyta</taxon>
        <taxon>Embryophyta</taxon>
        <taxon>Tracheophyta</taxon>
        <taxon>Spermatophyta</taxon>
        <taxon>Magnoliopsida</taxon>
        <taxon>eudicotyledons</taxon>
        <taxon>Gunneridae</taxon>
        <taxon>Pentapetalae</taxon>
        <taxon>rosids</taxon>
        <taxon>malvids</taxon>
        <taxon>Brassicales</taxon>
        <taxon>Brassicaceae</taxon>
        <taxon>Camelineae</taxon>
        <taxon>Arabidopsis</taxon>
    </lineage>
</organism>
<feature type="signal peptide" evidence="1">
    <location>
        <begin position="1"/>
        <end position="20"/>
    </location>
</feature>
<feature type="chain" id="PRO_0000308528" description="Formin-like protein 3">
    <location>
        <begin position="21"/>
        <end position="785"/>
    </location>
</feature>
<feature type="transmembrane region" description="Helical" evidence="1">
    <location>
        <begin position="154"/>
        <end position="174"/>
    </location>
</feature>
<feature type="domain" description="FH2" evidence="2">
    <location>
        <begin position="321"/>
        <end position="747"/>
    </location>
</feature>
<feature type="region of interest" description="Disordered" evidence="3">
    <location>
        <begin position="96"/>
        <end position="145"/>
    </location>
</feature>
<feature type="region of interest" description="Disordered" evidence="3">
    <location>
        <begin position="184"/>
        <end position="228"/>
    </location>
</feature>
<feature type="region of interest" description="Disordered" evidence="3">
    <location>
        <begin position="241"/>
        <end position="329"/>
    </location>
</feature>
<feature type="region of interest" description="Disordered" evidence="3">
    <location>
        <begin position="730"/>
        <end position="785"/>
    </location>
</feature>
<feature type="compositionally biased region" description="Low complexity" evidence="3">
    <location>
        <begin position="115"/>
        <end position="134"/>
    </location>
</feature>
<feature type="compositionally biased region" description="Polar residues" evidence="3">
    <location>
        <begin position="201"/>
        <end position="223"/>
    </location>
</feature>
<feature type="compositionally biased region" description="Pro residues" evidence="3">
    <location>
        <begin position="256"/>
        <end position="303"/>
    </location>
</feature>
<feature type="compositionally biased region" description="Polar residues" evidence="3">
    <location>
        <begin position="745"/>
        <end position="754"/>
    </location>
</feature>
<feature type="compositionally biased region" description="Acidic residues" evidence="3">
    <location>
        <begin position="773"/>
        <end position="785"/>
    </location>
</feature>
<feature type="sequence conflict" description="In Ref. 1; ACQ91096." evidence="5" ref="1">
    <original>A</original>
    <variation>T</variation>
    <location>
        <position position="170"/>
    </location>
</feature>